<accession>Q8F710</accession>
<evidence type="ECO:0000255" key="1">
    <source>
        <dbReference type="HAMAP-Rule" id="MF_01865"/>
    </source>
</evidence>
<evidence type="ECO:0000255" key="2">
    <source>
        <dbReference type="PROSITE-ProRule" id="PRU01266"/>
    </source>
</evidence>
<sequence>MDKKFYITTLGCPKNIADSMSMHHSLLEEGFTLASLPEESDFHFINTCTFIQSATEETIQTILSAAQVKKQNHQKLVVVGCFAERYPDNIHSEIPEVDLFFGTGKYSQAGKILREKFPELSPSQLEFNDSLLERWKLSSKIENYSKPYAYVKVSDGCNRGCSFCIIPSFRGKFVESPLDDILRDTNRAIRAGAKEICLVSQDTVYYGRDSEILLDMVRKVAEIDSLEILRLLYLYPDKKTEKLIRLMGETSKIAPYLESPLQHVSSKILKVMNRTGESSYFKDLFSLAREVKPGLEIRTSFIIGYPGEEPEDVDQILRFIEDTRPEKVNLFSYSPQEGTKGAQLKQTVSEKEKSKRINLIRDSHLEILEEIHESRIGRTYDAIVDGIEDGQVVVRRFQDAPEMDEVVYVDDVSLIPGRIGKVRIDSFYEYDMNGTWV</sequence>
<name>RIMO_LEPIN</name>
<comment type="function">
    <text evidence="1">Catalyzes the methylthiolation of an aspartic acid residue of ribosomal protein uS12.</text>
</comment>
<comment type="catalytic activity">
    <reaction evidence="1">
        <text>L-aspartate(89)-[ribosomal protein uS12]-hydrogen + (sulfur carrier)-SH + AH2 + 2 S-adenosyl-L-methionine = 3-methylsulfanyl-L-aspartate(89)-[ribosomal protein uS12]-hydrogen + (sulfur carrier)-H + 5'-deoxyadenosine + L-methionine + A + S-adenosyl-L-homocysteine + 2 H(+)</text>
        <dbReference type="Rhea" id="RHEA:37087"/>
        <dbReference type="Rhea" id="RHEA-COMP:10460"/>
        <dbReference type="Rhea" id="RHEA-COMP:10461"/>
        <dbReference type="Rhea" id="RHEA-COMP:14737"/>
        <dbReference type="Rhea" id="RHEA-COMP:14739"/>
        <dbReference type="ChEBI" id="CHEBI:13193"/>
        <dbReference type="ChEBI" id="CHEBI:15378"/>
        <dbReference type="ChEBI" id="CHEBI:17319"/>
        <dbReference type="ChEBI" id="CHEBI:17499"/>
        <dbReference type="ChEBI" id="CHEBI:29917"/>
        <dbReference type="ChEBI" id="CHEBI:29961"/>
        <dbReference type="ChEBI" id="CHEBI:57844"/>
        <dbReference type="ChEBI" id="CHEBI:57856"/>
        <dbReference type="ChEBI" id="CHEBI:59789"/>
        <dbReference type="ChEBI" id="CHEBI:64428"/>
        <dbReference type="ChEBI" id="CHEBI:73599"/>
        <dbReference type="EC" id="2.8.4.4"/>
    </reaction>
</comment>
<comment type="cofactor">
    <cofactor evidence="1">
        <name>[4Fe-4S] cluster</name>
        <dbReference type="ChEBI" id="CHEBI:49883"/>
    </cofactor>
    <text evidence="1">Binds 2 [4Fe-4S] clusters. One cluster is coordinated with 3 cysteines and an exchangeable S-adenosyl-L-methionine.</text>
</comment>
<comment type="subcellular location">
    <subcellularLocation>
        <location evidence="1">Cytoplasm</location>
    </subcellularLocation>
</comment>
<comment type="similarity">
    <text evidence="1">Belongs to the methylthiotransferase family. RimO subfamily.</text>
</comment>
<feature type="chain" id="PRO_0000374881" description="Ribosomal protein uS12 methylthiotransferase RimO">
    <location>
        <begin position="1"/>
        <end position="437"/>
    </location>
</feature>
<feature type="domain" description="MTTase N-terminal" evidence="1">
    <location>
        <begin position="3"/>
        <end position="118"/>
    </location>
</feature>
<feature type="domain" description="Radical SAM core" evidence="2">
    <location>
        <begin position="143"/>
        <end position="370"/>
    </location>
</feature>
<feature type="domain" description="TRAM" evidence="1">
    <location>
        <begin position="373"/>
        <end position="437"/>
    </location>
</feature>
<feature type="binding site" evidence="1">
    <location>
        <position position="12"/>
    </location>
    <ligand>
        <name>[4Fe-4S] cluster</name>
        <dbReference type="ChEBI" id="CHEBI:49883"/>
        <label>1</label>
    </ligand>
</feature>
<feature type="binding site" evidence="1">
    <location>
        <position position="48"/>
    </location>
    <ligand>
        <name>[4Fe-4S] cluster</name>
        <dbReference type="ChEBI" id="CHEBI:49883"/>
        <label>1</label>
    </ligand>
</feature>
<feature type="binding site" evidence="1">
    <location>
        <position position="81"/>
    </location>
    <ligand>
        <name>[4Fe-4S] cluster</name>
        <dbReference type="ChEBI" id="CHEBI:49883"/>
        <label>1</label>
    </ligand>
</feature>
<feature type="binding site" evidence="1">
    <location>
        <position position="157"/>
    </location>
    <ligand>
        <name>[4Fe-4S] cluster</name>
        <dbReference type="ChEBI" id="CHEBI:49883"/>
        <label>2</label>
        <note>4Fe-4S-S-AdoMet</note>
    </ligand>
</feature>
<feature type="binding site" evidence="1">
    <location>
        <position position="161"/>
    </location>
    <ligand>
        <name>[4Fe-4S] cluster</name>
        <dbReference type="ChEBI" id="CHEBI:49883"/>
        <label>2</label>
        <note>4Fe-4S-S-AdoMet</note>
    </ligand>
</feature>
<feature type="binding site" evidence="1">
    <location>
        <position position="164"/>
    </location>
    <ligand>
        <name>[4Fe-4S] cluster</name>
        <dbReference type="ChEBI" id="CHEBI:49883"/>
        <label>2</label>
        <note>4Fe-4S-S-AdoMet</note>
    </ligand>
</feature>
<gene>
    <name evidence="1" type="primary">rimO</name>
    <name type="ordered locus">LA_1138</name>
</gene>
<organism>
    <name type="scientific">Leptospira interrogans serogroup Icterohaemorrhagiae serovar Lai (strain 56601)</name>
    <dbReference type="NCBI Taxonomy" id="189518"/>
    <lineage>
        <taxon>Bacteria</taxon>
        <taxon>Pseudomonadati</taxon>
        <taxon>Spirochaetota</taxon>
        <taxon>Spirochaetia</taxon>
        <taxon>Leptospirales</taxon>
        <taxon>Leptospiraceae</taxon>
        <taxon>Leptospira</taxon>
    </lineage>
</organism>
<keyword id="KW-0004">4Fe-4S</keyword>
<keyword id="KW-0963">Cytoplasm</keyword>
<keyword id="KW-0408">Iron</keyword>
<keyword id="KW-0411">Iron-sulfur</keyword>
<keyword id="KW-0479">Metal-binding</keyword>
<keyword id="KW-1185">Reference proteome</keyword>
<keyword id="KW-0949">S-adenosyl-L-methionine</keyword>
<keyword id="KW-0808">Transferase</keyword>
<reference key="1">
    <citation type="journal article" date="2003" name="Nature">
        <title>Unique physiological and pathogenic features of Leptospira interrogans revealed by whole-genome sequencing.</title>
        <authorList>
            <person name="Ren S.-X."/>
            <person name="Fu G."/>
            <person name="Jiang X.-G."/>
            <person name="Zeng R."/>
            <person name="Miao Y.-G."/>
            <person name="Xu H."/>
            <person name="Zhang Y.-X."/>
            <person name="Xiong H."/>
            <person name="Lu G."/>
            <person name="Lu L.-F."/>
            <person name="Jiang H.-Q."/>
            <person name="Jia J."/>
            <person name="Tu Y.-F."/>
            <person name="Jiang J.-X."/>
            <person name="Gu W.-Y."/>
            <person name="Zhang Y.-Q."/>
            <person name="Cai Z."/>
            <person name="Sheng H.-H."/>
            <person name="Yin H.-F."/>
            <person name="Zhang Y."/>
            <person name="Zhu G.-F."/>
            <person name="Wan M."/>
            <person name="Huang H.-L."/>
            <person name="Qian Z."/>
            <person name="Wang S.-Y."/>
            <person name="Ma W."/>
            <person name="Yao Z.-J."/>
            <person name="Shen Y."/>
            <person name="Qiang B.-Q."/>
            <person name="Xia Q.-C."/>
            <person name="Guo X.-K."/>
            <person name="Danchin A."/>
            <person name="Saint Girons I."/>
            <person name="Somerville R.L."/>
            <person name="Wen Y.-M."/>
            <person name="Shi M.-H."/>
            <person name="Chen Z."/>
            <person name="Xu J.-G."/>
            <person name="Zhao G.-P."/>
        </authorList>
    </citation>
    <scope>NUCLEOTIDE SEQUENCE [LARGE SCALE GENOMIC DNA]</scope>
    <source>
        <strain>56601</strain>
    </source>
</reference>
<protein>
    <recommendedName>
        <fullName evidence="1">Ribosomal protein uS12 methylthiotransferase RimO</fullName>
        <shortName evidence="1">uS12 MTTase</shortName>
        <shortName evidence="1">uS12 methylthiotransferase</shortName>
        <ecNumber evidence="1">2.8.4.4</ecNumber>
    </recommendedName>
    <alternativeName>
        <fullName evidence="1">Ribosomal protein uS12 (aspartate-C(3))-methylthiotransferase</fullName>
    </alternativeName>
    <alternativeName>
        <fullName evidence="1">Ribosome maturation factor RimO</fullName>
    </alternativeName>
</protein>
<dbReference type="EC" id="2.8.4.4" evidence="1"/>
<dbReference type="EMBL" id="AE010300">
    <property type="protein sequence ID" value="AAN48337.1"/>
    <property type="molecule type" value="Genomic_DNA"/>
</dbReference>
<dbReference type="RefSeq" id="NP_711319.1">
    <property type="nucleotide sequence ID" value="NC_004342.2"/>
</dbReference>
<dbReference type="RefSeq" id="WP_000358323.1">
    <property type="nucleotide sequence ID" value="NC_004342.2"/>
</dbReference>
<dbReference type="SMR" id="Q8F710"/>
<dbReference type="FunCoup" id="Q8F710">
    <property type="interactions" value="327"/>
</dbReference>
<dbReference type="STRING" id="189518.LA_1138"/>
<dbReference type="PaxDb" id="189518-LA_1138"/>
<dbReference type="EnsemblBacteria" id="AAN48337">
    <property type="protein sequence ID" value="AAN48337"/>
    <property type="gene ID" value="LA_1138"/>
</dbReference>
<dbReference type="KEGG" id="lil:LA_1138"/>
<dbReference type="PATRIC" id="fig|189518.3.peg.1133"/>
<dbReference type="HOGENOM" id="CLU_018697_0_1_12"/>
<dbReference type="InParanoid" id="Q8F710"/>
<dbReference type="OrthoDB" id="9805215at2"/>
<dbReference type="Proteomes" id="UP000001408">
    <property type="component" value="Chromosome I"/>
</dbReference>
<dbReference type="GO" id="GO:0005829">
    <property type="term" value="C:cytosol"/>
    <property type="evidence" value="ECO:0000318"/>
    <property type="project" value="GO_Central"/>
</dbReference>
<dbReference type="GO" id="GO:0051539">
    <property type="term" value="F:4 iron, 4 sulfur cluster binding"/>
    <property type="evidence" value="ECO:0000318"/>
    <property type="project" value="GO_Central"/>
</dbReference>
<dbReference type="GO" id="GO:0035599">
    <property type="term" value="F:aspartic acid methylthiotransferase activity"/>
    <property type="evidence" value="ECO:0000318"/>
    <property type="project" value="GO_Central"/>
</dbReference>
<dbReference type="GO" id="GO:0046872">
    <property type="term" value="F:metal ion binding"/>
    <property type="evidence" value="ECO:0007669"/>
    <property type="project" value="UniProtKB-KW"/>
</dbReference>
<dbReference type="GO" id="GO:0103039">
    <property type="term" value="F:protein methylthiotransferase activity"/>
    <property type="evidence" value="ECO:0007669"/>
    <property type="project" value="UniProtKB-EC"/>
</dbReference>
<dbReference type="GO" id="GO:0006400">
    <property type="term" value="P:tRNA modification"/>
    <property type="evidence" value="ECO:0007669"/>
    <property type="project" value="InterPro"/>
</dbReference>
<dbReference type="CDD" id="cd01335">
    <property type="entry name" value="Radical_SAM"/>
    <property type="match status" value="1"/>
</dbReference>
<dbReference type="FunFam" id="3.40.50.12160:FF:000010">
    <property type="entry name" value="Ribosomal protein S12 methylthiotransferase RimO"/>
    <property type="match status" value="1"/>
</dbReference>
<dbReference type="FunFam" id="3.80.30.20:FF:000001">
    <property type="entry name" value="tRNA-2-methylthio-N(6)-dimethylallyladenosine synthase 2"/>
    <property type="match status" value="1"/>
</dbReference>
<dbReference type="Gene3D" id="3.40.50.12160">
    <property type="entry name" value="Methylthiotransferase, N-terminal domain"/>
    <property type="match status" value="1"/>
</dbReference>
<dbReference type="Gene3D" id="2.40.50.140">
    <property type="entry name" value="Nucleic acid-binding proteins"/>
    <property type="match status" value="1"/>
</dbReference>
<dbReference type="Gene3D" id="3.80.30.20">
    <property type="entry name" value="tm_1862 like domain"/>
    <property type="match status" value="1"/>
</dbReference>
<dbReference type="HAMAP" id="MF_01865">
    <property type="entry name" value="MTTase_RimO"/>
    <property type="match status" value="1"/>
</dbReference>
<dbReference type="InterPro" id="IPR006638">
    <property type="entry name" value="Elp3/MiaA/NifB-like_rSAM"/>
</dbReference>
<dbReference type="InterPro" id="IPR005839">
    <property type="entry name" value="Methylthiotransferase"/>
</dbReference>
<dbReference type="InterPro" id="IPR020612">
    <property type="entry name" value="Methylthiotransferase_CS"/>
</dbReference>
<dbReference type="InterPro" id="IPR013848">
    <property type="entry name" value="Methylthiotransferase_N"/>
</dbReference>
<dbReference type="InterPro" id="IPR038135">
    <property type="entry name" value="Methylthiotransferase_N_sf"/>
</dbReference>
<dbReference type="InterPro" id="IPR012340">
    <property type="entry name" value="NA-bd_OB-fold"/>
</dbReference>
<dbReference type="InterPro" id="IPR005840">
    <property type="entry name" value="Ribosomal_uS12_MeSTrfase_RimO"/>
</dbReference>
<dbReference type="InterPro" id="IPR007197">
    <property type="entry name" value="rSAM"/>
</dbReference>
<dbReference type="InterPro" id="IPR023404">
    <property type="entry name" value="rSAM_horseshoe"/>
</dbReference>
<dbReference type="InterPro" id="IPR002792">
    <property type="entry name" value="TRAM_dom"/>
</dbReference>
<dbReference type="NCBIfam" id="TIGR01125">
    <property type="entry name" value="30S ribosomal protein S12 methylthiotransferase RimO"/>
    <property type="match status" value="1"/>
</dbReference>
<dbReference type="NCBIfam" id="TIGR00089">
    <property type="entry name" value="MiaB/RimO family radical SAM methylthiotransferase"/>
    <property type="match status" value="1"/>
</dbReference>
<dbReference type="PANTHER" id="PTHR43837">
    <property type="entry name" value="RIBOSOMAL PROTEIN S12 METHYLTHIOTRANSFERASE RIMO"/>
    <property type="match status" value="1"/>
</dbReference>
<dbReference type="PANTHER" id="PTHR43837:SF1">
    <property type="entry name" value="RIBOSOMAL PROTEIN US12 METHYLTHIOTRANSFERASE RIMO"/>
    <property type="match status" value="1"/>
</dbReference>
<dbReference type="Pfam" id="PF04055">
    <property type="entry name" value="Radical_SAM"/>
    <property type="match status" value="1"/>
</dbReference>
<dbReference type="Pfam" id="PF18693">
    <property type="entry name" value="TRAM_2"/>
    <property type="match status" value="1"/>
</dbReference>
<dbReference type="Pfam" id="PF00919">
    <property type="entry name" value="UPF0004"/>
    <property type="match status" value="1"/>
</dbReference>
<dbReference type="SFLD" id="SFLDG01082">
    <property type="entry name" value="B12-binding_domain_containing"/>
    <property type="match status" value="1"/>
</dbReference>
<dbReference type="SFLD" id="SFLDG01061">
    <property type="entry name" value="methylthiotransferase"/>
    <property type="match status" value="1"/>
</dbReference>
<dbReference type="SFLD" id="SFLDS00029">
    <property type="entry name" value="Radical_SAM"/>
    <property type="match status" value="1"/>
</dbReference>
<dbReference type="SMART" id="SM00729">
    <property type="entry name" value="Elp3"/>
    <property type="match status" value="1"/>
</dbReference>
<dbReference type="SUPFAM" id="SSF102114">
    <property type="entry name" value="Radical SAM enzymes"/>
    <property type="match status" value="1"/>
</dbReference>
<dbReference type="PROSITE" id="PS51449">
    <property type="entry name" value="MTTASE_N"/>
    <property type="match status" value="1"/>
</dbReference>
<dbReference type="PROSITE" id="PS01278">
    <property type="entry name" value="MTTASE_RADICAL"/>
    <property type="match status" value="1"/>
</dbReference>
<dbReference type="PROSITE" id="PS51918">
    <property type="entry name" value="RADICAL_SAM"/>
    <property type="match status" value="1"/>
</dbReference>
<proteinExistence type="inferred from homology"/>